<comment type="function">
    <text>The primary product of this enzyme is 4,2',4',6'-tetrahydroxychalcone (also termed naringenin-chalcone or chalcone) which can under specific conditions spontaneously isomerize into naringenin.</text>
</comment>
<comment type="catalytic activity">
    <reaction evidence="1">
        <text>(E)-4-coumaroyl-CoA + 3 malonyl-CoA + 3 H(+) = 2',4,4',6'-tetrahydroxychalcone + 3 CO2 + 4 CoA</text>
        <dbReference type="Rhea" id="RHEA:11128"/>
        <dbReference type="ChEBI" id="CHEBI:15378"/>
        <dbReference type="ChEBI" id="CHEBI:15413"/>
        <dbReference type="ChEBI" id="CHEBI:16526"/>
        <dbReference type="ChEBI" id="CHEBI:57287"/>
        <dbReference type="ChEBI" id="CHEBI:57384"/>
        <dbReference type="ChEBI" id="CHEBI:85008"/>
        <dbReference type="EC" id="2.3.1.74"/>
    </reaction>
</comment>
<comment type="pathway">
    <text>Secondary metabolite biosynthesis; flavonoid biosynthesis.</text>
</comment>
<comment type="similarity">
    <text evidence="2">Belongs to the thiolase-like superfamily. Chalcone/stilbene synthases family.</text>
</comment>
<name>CHS7_IPOBA</name>
<sequence>MVTVEEVRKAKRAEGPATILAIGTATPANCVNQSTYPDYYFRITNSEHKTELKEKFQRMCDKSMITKRYMHLTEEILKENPSFCEYMAPSLDARQDIAVVEVPKLGKEAAQSAIKEWGQPKSKITHVFFCTTSGVDMPGADYQLTKLLGLRPSVKRLMMYQQGCFAGGTVLRLAKDLAENNKGARVLIVCSEITVVTFRGPSETHLDSLVGQALFGDGAAAVIVGADPTPAEKPLFQLVSAAQTLAPDSCGAIDGHLREVGLTFHLLKDVPSVVSNNIEKCLFEAFNPLGISDWNSVFWIAHPGGPAILDQVEDKLGLKPEKLRATRHVLSEYGNMSSACVLFILDEMRKASSNAGLGTTGEGLEWGVLFGFGPGLTIETVVLHSVPIKPGPH</sequence>
<organism>
    <name type="scientific">Ipomoea batatas</name>
    <name type="common">Sweet potato</name>
    <name type="synonym">Convolvulus batatas</name>
    <dbReference type="NCBI Taxonomy" id="4120"/>
    <lineage>
        <taxon>Eukaryota</taxon>
        <taxon>Viridiplantae</taxon>
        <taxon>Streptophyta</taxon>
        <taxon>Embryophyta</taxon>
        <taxon>Tracheophyta</taxon>
        <taxon>Spermatophyta</taxon>
        <taxon>Magnoliopsida</taxon>
        <taxon>eudicotyledons</taxon>
        <taxon>Gunneridae</taxon>
        <taxon>Pentapetalae</taxon>
        <taxon>asterids</taxon>
        <taxon>lamiids</taxon>
        <taxon>Solanales</taxon>
        <taxon>Convolvulaceae</taxon>
        <taxon>Ipomoeeae</taxon>
        <taxon>Ipomoea</taxon>
    </lineage>
</organism>
<dbReference type="EC" id="2.3.1.74"/>
<dbReference type="EMBL" id="AB037392">
    <property type="protein sequence ID" value="BAA90331.1"/>
    <property type="molecule type" value="mRNA"/>
</dbReference>
<dbReference type="SMR" id="Q9MB37"/>
<dbReference type="UniPathway" id="UPA00154"/>
<dbReference type="GO" id="GO:0016210">
    <property type="term" value="F:naringenin-chalcone synthase activity"/>
    <property type="evidence" value="ECO:0007669"/>
    <property type="project" value="UniProtKB-EC"/>
</dbReference>
<dbReference type="GO" id="GO:0009813">
    <property type="term" value="P:flavonoid biosynthetic process"/>
    <property type="evidence" value="ECO:0007669"/>
    <property type="project" value="UniProtKB-UniPathway"/>
</dbReference>
<dbReference type="GO" id="GO:0030639">
    <property type="term" value="P:polyketide biosynthetic process"/>
    <property type="evidence" value="ECO:0007669"/>
    <property type="project" value="TreeGrafter"/>
</dbReference>
<dbReference type="CDD" id="cd00831">
    <property type="entry name" value="CHS_like"/>
    <property type="match status" value="1"/>
</dbReference>
<dbReference type="FunFam" id="3.40.47.10:FF:000014">
    <property type="entry name" value="Chalcone synthase 1"/>
    <property type="match status" value="1"/>
</dbReference>
<dbReference type="FunFam" id="3.40.47.10:FF:000025">
    <property type="entry name" value="Chalcone synthase 2"/>
    <property type="match status" value="1"/>
</dbReference>
<dbReference type="Gene3D" id="3.40.47.10">
    <property type="match status" value="2"/>
</dbReference>
<dbReference type="InterPro" id="IPR012328">
    <property type="entry name" value="Chalcone/stilbene_synt_C"/>
</dbReference>
<dbReference type="InterPro" id="IPR001099">
    <property type="entry name" value="Chalcone/stilbene_synt_N"/>
</dbReference>
<dbReference type="InterPro" id="IPR018088">
    <property type="entry name" value="Chalcone/stilbene_synthase_AS"/>
</dbReference>
<dbReference type="InterPro" id="IPR011141">
    <property type="entry name" value="Polyketide_synthase_type-III"/>
</dbReference>
<dbReference type="InterPro" id="IPR016039">
    <property type="entry name" value="Thiolase-like"/>
</dbReference>
<dbReference type="PANTHER" id="PTHR11877:SF80">
    <property type="entry name" value="CHALCONE SYNTHASE 1"/>
    <property type="match status" value="1"/>
</dbReference>
<dbReference type="PANTHER" id="PTHR11877">
    <property type="entry name" value="HYDROXYMETHYLGLUTARYL-COA SYNTHASE"/>
    <property type="match status" value="1"/>
</dbReference>
<dbReference type="Pfam" id="PF02797">
    <property type="entry name" value="Chal_sti_synt_C"/>
    <property type="match status" value="1"/>
</dbReference>
<dbReference type="Pfam" id="PF00195">
    <property type="entry name" value="Chal_sti_synt_N"/>
    <property type="match status" value="1"/>
</dbReference>
<dbReference type="PIRSF" id="PIRSF000451">
    <property type="entry name" value="PKS_III"/>
    <property type="match status" value="1"/>
</dbReference>
<dbReference type="SUPFAM" id="SSF53901">
    <property type="entry name" value="Thiolase-like"/>
    <property type="match status" value="2"/>
</dbReference>
<dbReference type="PROSITE" id="PS00441">
    <property type="entry name" value="CHALCONE_SYNTH"/>
    <property type="match status" value="1"/>
</dbReference>
<accession>Q9MB37</accession>
<gene>
    <name type="primary">CHS-DIII</name>
</gene>
<proteinExistence type="evidence at transcript level"/>
<evidence type="ECO:0000255" key="1">
    <source>
        <dbReference type="PROSITE-ProRule" id="PRU10023"/>
    </source>
</evidence>
<evidence type="ECO:0000305" key="2"/>
<protein>
    <recommendedName>
        <fullName>Chalcone synthase DIII</fullName>
        <ecNumber>2.3.1.74</ecNumber>
    </recommendedName>
    <alternativeName>
        <fullName>Naringenin-chalcone synthase DIII</fullName>
    </alternativeName>
</protein>
<feature type="chain" id="PRO_0000215988" description="Chalcone synthase DIII">
    <location>
        <begin position="1"/>
        <end position="393"/>
    </location>
</feature>
<feature type="active site" evidence="1">
    <location>
        <position position="164"/>
    </location>
</feature>
<reference key="1">
    <citation type="submission" date="2000-01" db="EMBL/GenBank/DDBJ databases">
        <authorList>
            <person name="Hsu T.-J."/>
            <person name="Morita H."/>
            <person name="Shiokawa K."/>
            <person name="Noguchi H."/>
        </authorList>
    </citation>
    <scope>NUCLEOTIDE SEQUENCE [MRNA]</scope>
</reference>
<keyword id="KW-0012">Acyltransferase</keyword>
<keyword id="KW-0284">Flavonoid biosynthesis</keyword>
<keyword id="KW-0808">Transferase</keyword>